<keyword id="KW-0456">Lyase</keyword>
<keyword id="KW-0663">Pyridoxal phosphate</keyword>
<keyword id="KW-0704">Schiff base</keyword>
<protein>
    <recommendedName>
        <fullName evidence="1">Pyridoxal 5'-phosphate synthase subunit PdxS</fullName>
        <shortName evidence="1">PLP synthase subunit PdxS</shortName>
        <ecNumber evidence="1">4.3.3.6</ecNumber>
    </recommendedName>
    <alternativeName>
        <fullName evidence="1">Pdx1</fullName>
    </alternativeName>
</protein>
<organism>
    <name type="scientific">Haemophilus influenzae (strain PittGG)</name>
    <dbReference type="NCBI Taxonomy" id="374931"/>
    <lineage>
        <taxon>Bacteria</taxon>
        <taxon>Pseudomonadati</taxon>
        <taxon>Pseudomonadota</taxon>
        <taxon>Gammaproteobacteria</taxon>
        <taxon>Pasteurellales</taxon>
        <taxon>Pasteurellaceae</taxon>
        <taxon>Haemophilus</taxon>
    </lineage>
</organism>
<proteinExistence type="inferred from homology"/>
<feature type="chain" id="PRO_1000070379" description="Pyridoxal 5'-phosphate synthase subunit PdxS">
    <location>
        <begin position="1"/>
        <end position="291"/>
    </location>
</feature>
<feature type="active site" description="Schiff-base intermediate with D-ribose 5-phosphate" evidence="1">
    <location>
        <position position="80"/>
    </location>
</feature>
<feature type="binding site" evidence="1">
    <location>
        <position position="23"/>
    </location>
    <ligand>
        <name>D-ribose 5-phosphate</name>
        <dbReference type="ChEBI" id="CHEBI:78346"/>
    </ligand>
</feature>
<feature type="binding site" evidence="1">
    <location>
        <position position="152"/>
    </location>
    <ligand>
        <name>D-ribose 5-phosphate</name>
        <dbReference type="ChEBI" id="CHEBI:78346"/>
    </ligand>
</feature>
<feature type="binding site" evidence="1">
    <location>
        <position position="164"/>
    </location>
    <ligand>
        <name>D-glyceraldehyde 3-phosphate</name>
        <dbReference type="ChEBI" id="CHEBI:59776"/>
    </ligand>
</feature>
<feature type="binding site" evidence="1">
    <location>
        <position position="213"/>
    </location>
    <ligand>
        <name>D-ribose 5-phosphate</name>
        <dbReference type="ChEBI" id="CHEBI:78346"/>
    </ligand>
</feature>
<feature type="binding site" evidence="1">
    <location>
        <begin position="234"/>
        <end position="235"/>
    </location>
    <ligand>
        <name>D-ribose 5-phosphate</name>
        <dbReference type="ChEBI" id="CHEBI:78346"/>
    </ligand>
</feature>
<accession>A5UF86</accession>
<comment type="function">
    <text evidence="1">Catalyzes the formation of pyridoxal 5'-phosphate from ribose 5-phosphate (RBP), glyceraldehyde 3-phosphate (G3P) and ammonia. The ammonia is provided by the PdxT subunit. Can also use ribulose 5-phosphate and dihydroxyacetone phosphate as substrates, resulting from enzyme-catalyzed isomerization of RBP and G3P, respectively.</text>
</comment>
<comment type="catalytic activity">
    <reaction evidence="1">
        <text>aldehydo-D-ribose 5-phosphate + D-glyceraldehyde 3-phosphate + L-glutamine = pyridoxal 5'-phosphate + L-glutamate + phosphate + 3 H2O + H(+)</text>
        <dbReference type="Rhea" id="RHEA:31507"/>
        <dbReference type="ChEBI" id="CHEBI:15377"/>
        <dbReference type="ChEBI" id="CHEBI:15378"/>
        <dbReference type="ChEBI" id="CHEBI:29985"/>
        <dbReference type="ChEBI" id="CHEBI:43474"/>
        <dbReference type="ChEBI" id="CHEBI:58273"/>
        <dbReference type="ChEBI" id="CHEBI:58359"/>
        <dbReference type="ChEBI" id="CHEBI:59776"/>
        <dbReference type="ChEBI" id="CHEBI:597326"/>
        <dbReference type="EC" id="4.3.3.6"/>
    </reaction>
</comment>
<comment type="pathway">
    <text evidence="1">Cofactor biosynthesis; pyridoxal 5'-phosphate biosynthesis.</text>
</comment>
<comment type="subunit">
    <text evidence="1">In the presence of PdxT, forms a dodecamer of heterodimers.</text>
</comment>
<comment type="similarity">
    <text evidence="1">Belongs to the PdxS/SNZ family.</text>
</comment>
<dbReference type="EC" id="4.3.3.6" evidence="1"/>
<dbReference type="EMBL" id="CP000672">
    <property type="protein sequence ID" value="ABQ99441.1"/>
    <property type="molecule type" value="Genomic_DNA"/>
</dbReference>
<dbReference type="SMR" id="A5UF86"/>
<dbReference type="KEGG" id="hiq:CGSHiGG_01915"/>
<dbReference type="HOGENOM" id="CLU_055352_1_0_6"/>
<dbReference type="UniPathway" id="UPA00245"/>
<dbReference type="Proteomes" id="UP000001990">
    <property type="component" value="Chromosome"/>
</dbReference>
<dbReference type="GO" id="GO:0036381">
    <property type="term" value="F:pyridoxal 5'-phosphate synthase (glutamine hydrolysing) activity"/>
    <property type="evidence" value="ECO:0007669"/>
    <property type="project" value="UniProtKB-UniRule"/>
</dbReference>
<dbReference type="GO" id="GO:0006520">
    <property type="term" value="P:amino acid metabolic process"/>
    <property type="evidence" value="ECO:0007669"/>
    <property type="project" value="TreeGrafter"/>
</dbReference>
<dbReference type="GO" id="GO:0042823">
    <property type="term" value="P:pyridoxal phosphate biosynthetic process"/>
    <property type="evidence" value="ECO:0007669"/>
    <property type="project" value="UniProtKB-UniRule"/>
</dbReference>
<dbReference type="GO" id="GO:0008615">
    <property type="term" value="P:pyridoxine biosynthetic process"/>
    <property type="evidence" value="ECO:0007669"/>
    <property type="project" value="TreeGrafter"/>
</dbReference>
<dbReference type="CDD" id="cd04727">
    <property type="entry name" value="pdxS"/>
    <property type="match status" value="1"/>
</dbReference>
<dbReference type="FunFam" id="3.20.20.70:FF:000001">
    <property type="entry name" value="Pyridoxine biosynthesis protein PDX1"/>
    <property type="match status" value="1"/>
</dbReference>
<dbReference type="Gene3D" id="3.20.20.70">
    <property type="entry name" value="Aldolase class I"/>
    <property type="match status" value="1"/>
</dbReference>
<dbReference type="HAMAP" id="MF_01824">
    <property type="entry name" value="PdxS"/>
    <property type="match status" value="1"/>
</dbReference>
<dbReference type="InterPro" id="IPR013785">
    <property type="entry name" value="Aldolase_TIM"/>
</dbReference>
<dbReference type="InterPro" id="IPR001852">
    <property type="entry name" value="PdxS/SNZ"/>
</dbReference>
<dbReference type="InterPro" id="IPR033755">
    <property type="entry name" value="PdxS/SNZ_N"/>
</dbReference>
<dbReference type="InterPro" id="IPR011060">
    <property type="entry name" value="RibuloseP-bd_barrel"/>
</dbReference>
<dbReference type="NCBIfam" id="NF003215">
    <property type="entry name" value="PRK04180.1"/>
    <property type="match status" value="1"/>
</dbReference>
<dbReference type="NCBIfam" id="TIGR00343">
    <property type="entry name" value="pyridoxal 5'-phosphate synthase lyase subunit PdxS"/>
    <property type="match status" value="1"/>
</dbReference>
<dbReference type="PANTHER" id="PTHR31829">
    <property type="entry name" value="PYRIDOXAL 5'-PHOSPHATE SYNTHASE SUBUNIT SNZ1-RELATED"/>
    <property type="match status" value="1"/>
</dbReference>
<dbReference type="PANTHER" id="PTHR31829:SF0">
    <property type="entry name" value="PYRIDOXAL 5'-PHOSPHATE SYNTHASE SUBUNIT SNZ1-RELATED"/>
    <property type="match status" value="1"/>
</dbReference>
<dbReference type="Pfam" id="PF01680">
    <property type="entry name" value="SOR_SNZ"/>
    <property type="match status" value="1"/>
</dbReference>
<dbReference type="PIRSF" id="PIRSF029271">
    <property type="entry name" value="Pdx1"/>
    <property type="match status" value="1"/>
</dbReference>
<dbReference type="SUPFAM" id="SSF51366">
    <property type="entry name" value="Ribulose-phoshate binding barrel"/>
    <property type="match status" value="1"/>
</dbReference>
<dbReference type="PROSITE" id="PS01235">
    <property type="entry name" value="PDXS_SNZ_1"/>
    <property type="match status" value="1"/>
</dbReference>
<dbReference type="PROSITE" id="PS51129">
    <property type="entry name" value="PDXS_SNZ_2"/>
    <property type="match status" value="1"/>
</dbReference>
<reference key="1">
    <citation type="journal article" date="2007" name="Genome Biol.">
        <title>Characterization and modeling of the Haemophilus influenzae core and supragenomes based on the complete genomic sequences of Rd and 12 clinical nontypeable strains.</title>
        <authorList>
            <person name="Hogg J.S."/>
            <person name="Hu F.Z."/>
            <person name="Janto B."/>
            <person name="Boissy R."/>
            <person name="Hayes J."/>
            <person name="Keefe R."/>
            <person name="Post J.C."/>
            <person name="Ehrlich G.D."/>
        </authorList>
    </citation>
    <scope>NUCLEOTIDE SEQUENCE [LARGE SCALE GENOMIC DNA]</scope>
    <source>
        <strain>PittGG</strain>
    </source>
</reference>
<sequence length="291" mass="31631">MAENRYELNKNLAQMLKGGVIMDVQNPEQARIAEAAGAAAVMALERIPADIRAVGGVSRMSDPKMIKEIQGAVSIPVMAKVRIGHFVEAQILEAIEIDYIDESEVLSPADNRFHVDKKEFQVPFVCGAKDLGEALRRIAEGASMIRTKGEPGTGDIVQAVRHMRMMSQEIRRIQNLREDELYVAAKDLQVPVELVQYVHKNGKLPVVNFAAGGIATPADAALMMQLGAEGVFVGSGIFKSGDPIKRASAIVKAVTNYQNPQILAKISEDLGEAMVGINENEIQILMAERGK</sequence>
<evidence type="ECO:0000255" key="1">
    <source>
        <dbReference type="HAMAP-Rule" id="MF_01824"/>
    </source>
</evidence>
<gene>
    <name evidence="1" type="primary">pdxS</name>
    <name type="ordered locus">CGSHiGG_01915</name>
</gene>
<name>PDXS_HAEIG</name>